<gene>
    <name evidence="2" type="primary">psbA</name>
</gene>
<keyword id="KW-0007">Acetylation</keyword>
<keyword id="KW-0106">Calcium</keyword>
<keyword id="KW-0148">Chlorophyll</keyword>
<keyword id="KW-0150">Chloroplast</keyword>
<keyword id="KW-0157">Chromophore</keyword>
<keyword id="KW-0249">Electron transport</keyword>
<keyword id="KW-0359">Herbicide resistance</keyword>
<keyword id="KW-0408">Iron</keyword>
<keyword id="KW-0460">Magnesium</keyword>
<keyword id="KW-0464">Manganese</keyword>
<keyword id="KW-0472">Membrane</keyword>
<keyword id="KW-0479">Metal-binding</keyword>
<keyword id="KW-0560">Oxidoreductase</keyword>
<keyword id="KW-0597">Phosphoprotein</keyword>
<keyword id="KW-0602">Photosynthesis</keyword>
<keyword id="KW-0604">Photosystem II</keyword>
<keyword id="KW-0934">Plastid</keyword>
<keyword id="KW-0793">Thylakoid</keyword>
<keyword id="KW-0812">Transmembrane</keyword>
<keyword id="KW-1133">Transmembrane helix</keyword>
<keyword id="KW-0813">Transport</keyword>
<evidence type="ECO:0000250" key="1">
    <source>
        <dbReference type="UniProtKB" id="P83755"/>
    </source>
</evidence>
<evidence type="ECO:0000255" key="2">
    <source>
        <dbReference type="HAMAP-Rule" id="MF_01379"/>
    </source>
</evidence>
<name>PSBA_AETCO</name>
<dbReference type="EC" id="1.10.3.9" evidence="2"/>
<dbReference type="EMBL" id="AP009366">
    <property type="protein sequence ID" value="BAF49751.1"/>
    <property type="molecule type" value="Genomic_DNA"/>
</dbReference>
<dbReference type="RefSeq" id="YP_001122927.1">
    <property type="nucleotide sequence ID" value="NC_009265.1"/>
</dbReference>
<dbReference type="SMR" id="A4QJ96"/>
<dbReference type="GeneID" id="4968600"/>
<dbReference type="GO" id="GO:0009535">
    <property type="term" value="C:chloroplast thylakoid membrane"/>
    <property type="evidence" value="ECO:0007669"/>
    <property type="project" value="UniProtKB-SubCell"/>
</dbReference>
<dbReference type="GO" id="GO:0009523">
    <property type="term" value="C:photosystem II"/>
    <property type="evidence" value="ECO:0007669"/>
    <property type="project" value="UniProtKB-KW"/>
</dbReference>
<dbReference type="GO" id="GO:0016168">
    <property type="term" value="F:chlorophyll binding"/>
    <property type="evidence" value="ECO:0007669"/>
    <property type="project" value="UniProtKB-UniRule"/>
</dbReference>
<dbReference type="GO" id="GO:0045156">
    <property type="term" value="F:electron transporter, transferring electrons within the cyclic electron transport pathway of photosynthesis activity"/>
    <property type="evidence" value="ECO:0007669"/>
    <property type="project" value="InterPro"/>
</dbReference>
<dbReference type="GO" id="GO:0005506">
    <property type="term" value="F:iron ion binding"/>
    <property type="evidence" value="ECO:0007669"/>
    <property type="project" value="UniProtKB-UniRule"/>
</dbReference>
<dbReference type="GO" id="GO:0016682">
    <property type="term" value="F:oxidoreductase activity, acting on diphenols and related substances as donors, oxygen as acceptor"/>
    <property type="evidence" value="ECO:0007669"/>
    <property type="project" value="UniProtKB-UniRule"/>
</dbReference>
<dbReference type="GO" id="GO:0010242">
    <property type="term" value="F:oxygen evolving activity"/>
    <property type="evidence" value="ECO:0007669"/>
    <property type="project" value="UniProtKB-EC"/>
</dbReference>
<dbReference type="GO" id="GO:0009772">
    <property type="term" value="P:photosynthetic electron transport in photosystem II"/>
    <property type="evidence" value="ECO:0007669"/>
    <property type="project" value="InterPro"/>
</dbReference>
<dbReference type="GO" id="GO:0009635">
    <property type="term" value="P:response to herbicide"/>
    <property type="evidence" value="ECO:0007669"/>
    <property type="project" value="UniProtKB-KW"/>
</dbReference>
<dbReference type="CDD" id="cd09289">
    <property type="entry name" value="Photosystem-II_D1"/>
    <property type="match status" value="1"/>
</dbReference>
<dbReference type="FunFam" id="1.20.85.10:FF:000002">
    <property type="entry name" value="Photosystem II protein D1"/>
    <property type="match status" value="1"/>
</dbReference>
<dbReference type="Gene3D" id="1.20.85.10">
    <property type="entry name" value="Photosystem II protein D1-like"/>
    <property type="match status" value="1"/>
</dbReference>
<dbReference type="HAMAP" id="MF_01379">
    <property type="entry name" value="PSII_PsbA_D1"/>
    <property type="match status" value="1"/>
</dbReference>
<dbReference type="InterPro" id="IPR055266">
    <property type="entry name" value="D1/D2"/>
</dbReference>
<dbReference type="InterPro" id="IPR036854">
    <property type="entry name" value="Photo_II_D1/D2_sf"/>
</dbReference>
<dbReference type="InterPro" id="IPR000484">
    <property type="entry name" value="Photo_RC_L/M"/>
</dbReference>
<dbReference type="InterPro" id="IPR055265">
    <property type="entry name" value="Photo_RC_L/M_CS"/>
</dbReference>
<dbReference type="InterPro" id="IPR005867">
    <property type="entry name" value="PSII_D1"/>
</dbReference>
<dbReference type="NCBIfam" id="TIGR01151">
    <property type="entry name" value="psbA"/>
    <property type="match status" value="1"/>
</dbReference>
<dbReference type="PANTHER" id="PTHR33149">
    <property type="entry name" value="PHOTOSYSTEM II PROTEIN D1"/>
    <property type="match status" value="1"/>
</dbReference>
<dbReference type="PANTHER" id="PTHR33149:SF55">
    <property type="entry name" value="PHOTOSYSTEM II PROTEIN D1"/>
    <property type="match status" value="1"/>
</dbReference>
<dbReference type="Pfam" id="PF00124">
    <property type="entry name" value="Photo_RC"/>
    <property type="match status" value="1"/>
</dbReference>
<dbReference type="PRINTS" id="PR00256">
    <property type="entry name" value="REACTNCENTRE"/>
</dbReference>
<dbReference type="SUPFAM" id="SSF81483">
    <property type="entry name" value="Bacterial photosystem II reaction centre, L and M subunits"/>
    <property type="match status" value="1"/>
</dbReference>
<dbReference type="PROSITE" id="PS00244">
    <property type="entry name" value="REACTION_CENTER"/>
    <property type="match status" value="1"/>
</dbReference>
<geneLocation type="chloroplast"/>
<comment type="function">
    <text evidence="2">Photosystem II (PSII) is a light-driven water:plastoquinone oxidoreductase that uses light energy to abstract electrons from H(2)O, generating O(2) and a proton gradient subsequently used for ATP formation. It consists of a core antenna complex that captures photons, and an electron transfer chain that converts photonic excitation into a charge separation. The D1/D2 (PsbA/PsbD) reaction center heterodimer binds P680, the primary electron donor of PSII as well as several subsequent electron acceptors.</text>
</comment>
<comment type="catalytic activity">
    <reaction evidence="2">
        <text>2 a plastoquinone + 4 hnu + 2 H2O = 2 a plastoquinol + O2</text>
        <dbReference type="Rhea" id="RHEA:36359"/>
        <dbReference type="Rhea" id="RHEA-COMP:9561"/>
        <dbReference type="Rhea" id="RHEA-COMP:9562"/>
        <dbReference type="ChEBI" id="CHEBI:15377"/>
        <dbReference type="ChEBI" id="CHEBI:15379"/>
        <dbReference type="ChEBI" id="CHEBI:17757"/>
        <dbReference type="ChEBI" id="CHEBI:30212"/>
        <dbReference type="ChEBI" id="CHEBI:62192"/>
        <dbReference type="EC" id="1.10.3.9"/>
    </reaction>
</comment>
<comment type="cofactor">
    <text evidence="2">The D1/D2 heterodimer binds P680, chlorophylls that are the primary electron donor of PSII, and subsequent electron acceptors. It shares a non-heme iron and each subunit binds pheophytin, quinone, additional chlorophylls, carotenoids and lipids. D1 provides most of the ligands for the Mn4-Ca-O5 cluster of the oxygen-evolving complex (OEC). There is also a Cl(-1) ion associated with D1 and D2, which is required for oxygen evolution. The PSII complex binds additional chlorophylls, carotenoids and specific lipids.</text>
</comment>
<comment type="subunit">
    <text evidence="2">PSII is composed of 1 copy each of membrane proteins PsbA, PsbB, PsbC, PsbD, PsbE, PsbF, PsbH, PsbI, PsbJ, PsbK, PsbL, PsbM, PsbT, PsbX, PsbY, PsbZ, Psb30/Ycf12, at least 3 peripheral proteins of the oxygen-evolving complex and a large number of cofactors. It forms dimeric complexes.</text>
</comment>
<comment type="subcellular location">
    <subcellularLocation>
        <location evidence="2">Plastid</location>
        <location evidence="2">Chloroplast thylakoid membrane</location>
        <topology evidence="2">Multi-pass membrane protein</topology>
    </subcellularLocation>
</comment>
<comment type="PTM">
    <text evidence="2">Tyr-161 forms a radical intermediate that is referred to as redox-active TyrZ, YZ or Y-Z.</text>
</comment>
<comment type="PTM">
    <text evidence="2">C-terminally processed by CTPA; processing is essential to allow assembly of the oxygen-evolving complex and thus photosynthetic growth.</text>
</comment>
<comment type="miscellaneous">
    <text evidence="2">2 of the reaction center chlorophylls (ChlD1 and ChlD2) are entirely coordinated by water.</text>
</comment>
<comment type="miscellaneous">
    <text evidence="2">Herbicides such as atrazine, BNT, diuron or ioxynil bind in the Q(B) binding site and block subsequent electron transfer.</text>
</comment>
<comment type="similarity">
    <text evidence="2">Belongs to the reaction center PufL/M/PsbA/D family.</text>
</comment>
<organism>
    <name type="scientific">Aethionema cordifolium</name>
    <name type="common">Lebanon stonecress</name>
    <dbReference type="NCBI Taxonomy" id="434059"/>
    <lineage>
        <taxon>Eukaryota</taxon>
        <taxon>Viridiplantae</taxon>
        <taxon>Streptophyta</taxon>
        <taxon>Embryophyta</taxon>
        <taxon>Tracheophyta</taxon>
        <taxon>Spermatophyta</taxon>
        <taxon>Magnoliopsida</taxon>
        <taxon>eudicotyledons</taxon>
        <taxon>Gunneridae</taxon>
        <taxon>Pentapetalae</taxon>
        <taxon>rosids</taxon>
        <taxon>malvids</taxon>
        <taxon>Brassicales</taxon>
        <taxon>Brassicaceae</taxon>
        <taxon>Aethionemeae</taxon>
        <taxon>Aethionema</taxon>
    </lineage>
</organism>
<sequence>MTAILERRESESLWGRFCNWITSTENRLYIGWFGVLMIPTLLTATSVFIIAFIAAPPVDIDGIREPVSGSLLYGNNIISGAIIPTSAAIGLHFYPIWEAASVDEWLYNGGPYELIVLHFLLGVACYMGREWELSFRLGMRPWIAVAYSAPVAAATAVFLIYPIGQGSFSDGMPLGISGTFNFMIVFQAEHNILMHPFHMLGVAGVFGGSLFSAMHGSLVTSSLIRETTENESANEGYRFGQEEETYNIVAAHGYFGRLIFQYASFNNSSSLHFFLTAWPVVGIWFTALGISTMAFNLNGFNFNQSVVDSQGRVINTWADIINRANLGMEVMHERNAHNFPLDLAVVEAPSTNG</sequence>
<feature type="initiator methionine" description="Removed" evidence="1">
    <location>
        <position position="1"/>
    </location>
</feature>
<feature type="chain" id="PRO_0000339938" description="Photosystem II protein D1" evidence="2">
    <location>
        <begin position="2"/>
        <end position="344"/>
    </location>
</feature>
<feature type="propeptide" id="PRO_0000339939" evidence="2">
    <location>
        <begin position="345"/>
        <end position="353"/>
    </location>
</feature>
<feature type="transmembrane region" description="Helical" evidence="2">
    <location>
        <begin position="29"/>
        <end position="46"/>
    </location>
</feature>
<feature type="transmembrane region" description="Helical" evidence="2">
    <location>
        <begin position="118"/>
        <end position="133"/>
    </location>
</feature>
<feature type="transmembrane region" description="Helical" evidence="2">
    <location>
        <begin position="142"/>
        <end position="156"/>
    </location>
</feature>
<feature type="transmembrane region" description="Helical" evidence="2">
    <location>
        <begin position="197"/>
        <end position="218"/>
    </location>
</feature>
<feature type="transmembrane region" description="Helical" evidence="2">
    <location>
        <begin position="274"/>
        <end position="288"/>
    </location>
</feature>
<feature type="binding site" description="axial binding residue" evidence="2">
    <location>
        <position position="118"/>
    </location>
    <ligand>
        <name>chlorophyll a</name>
        <dbReference type="ChEBI" id="CHEBI:58416"/>
        <label>ChlzD1</label>
    </ligand>
    <ligandPart>
        <name>Mg</name>
        <dbReference type="ChEBI" id="CHEBI:25107"/>
    </ligandPart>
</feature>
<feature type="binding site" evidence="2">
    <location>
        <position position="126"/>
    </location>
    <ligand>
        <name>pheophytin a</name>
        <dbReference type="ChEBI" id="CHEBI:136840"/>
        <label>D1</label>
    </ligand>
</feature>
<feature type="binding site" evidence="2">
    <location>
        <position position="170"/>
    </location>
    <ligand>
        <name>[CaMn4O5] cluster</name>
        <dbReference type="ChEBI" id="CHEBI:189552"/>
    </ligand>
</feature>
<feature type="binding site" evidence="2">
    <location>
        <position position="189"/>
    </location>
    <ligand>
        <name>[CaMn4O5] cluster</name>
        <dbReference type="ChEBI" id="CHEBI:189552"/>
    </ligand>
</feature>
<feature type="binding site" description="axial binding residue" evidence="2">
    <location>
        <position position="198"/>
    </location>
    <ligand>
        <name>chlorophyll a</name>
        <dbReference type="ChEBI" id="CHEBI:58416"/>
        <label>PD1</label>
    </ligand>
    <ligandPart>
        <name>Mg</name>
        <dbReference type="ChEBI" id="CHEBI:25107"/>
    </ligandPart>
</feature>
<feature type="binding site" evidence="2">
    <location>
        <position position="215"/>
    </location>
    <ligand>
        <name>a quinone</name>
        <dbReference type="ChEBI" id="CHEBI:132124"/>
        <label>B</label>
    </ligand>
</feature>
<feature type="binding site" evidence="2">
    <location>
        <position position="215"/>
    </location>
    <ligand>
        <name>Fe cation</name>
        <dbReference type="ChEBI" id="CHEBI:24875"/>
        <note>ligand shared with heterodimeric partner</note>
    </ligand>
</feature>
<feature type="binding site" evidence="2">
    <location>
        <begin position="264"/>
        <end position="265"/>
    </location>
    <ligand>
        <name>a quinone</name>
        <dbReference type="ChEBI" id="CHEBI:132124"/>
        <label>B</label>
    </ligand>
</feature>
<feature type="binding site" evidence="2">
    <location>
        <position position="272"/>
    </location>
    <ligand>
        <name>Fe cation</name>
        <dbReference type="ChEBI" id="CHEBI:24875"/>
        <note>ligand shared with heterodimeric partner</note>
    </ligand>
</feature>
<feature type="binding site" evidence="2">
    <location>
        <position position="332"/>
    </location>
    <ligand>
        <name>[CaMn4O5] cluster</name>
        <dbReference type="ChEBI" id="CHEBI:189552"/>
    </ligand>
</feature>
<feature type="binding site" evidence="2">
    <location>
        <position position="333"/>
    </location>
    <ligand>
        <name>[CaMn4O5] cluster</name>
        <dbReference type="ChEBI" id="CHEBI:189552"/>
    </ligand>
</feature>
<feature type="binding site" evidence="2">
    <location>
        <position position="342"/>
    </location>
    <ligand>
        <name>[CaMn4O5] cluster</name>
        <dbReference type="ChEBI" id="CHEBI:189552"/>
    </ligand>
</feature>
<feature type="binding site" evidence="2">
    <location>
        <position position="344"/>
    </location>
    <ligand>
        <name>[CaMn4O5] cluster</name>
        <dbReference type="ChEBI" id="CHEBI:189552"/>
    </ligand>
</feature>
<feature type="site" description="Tyrosine radical intermediate" evidence="2">
    <location>
        <position position="161"/>
    </location>
</feature>
<feature type="site" description="Stabilizes free radical intermediate" evidence="2">
    <location>
        <position position="190"/>
    </location>
</feature>
<feature type="site" description="Cleavage; by CTPA" evidence="2">
    <location>
        <begin position="344"/>
        <end position="345"/>
    </location>
</feature>
<feature type="modified residue" description="N-acetylthreonine" evidence="1 2">
    <location>
        <position position="2"/>
    </location>
</feature>
<feature type="modified residue" description="Phosphothreonine" evidence="1 2">
    <location>
        <position position="2"/>
    </location>
</feature>
<accession>A4QJ96</accession>
<proteinExistence type="inferred from homology"/>
<protein>
    <recommendedName>
        <fullName evidence="2">Photosystem II protein D1</fullName>
        <shortName evidence="2">PSII D1 protein</shortName>
        <ecNumber evidence="2">1.10.3.9</ecNumber>
    </recommendedName>
    <alternativeName>
        <fullName evidence="2">Photosystem II Q(B) protein</fullName>
    </alternativeName>
</protein>
<reference key="1">
    <citation type="submission" date="2007-03" db="EMBL/GenBank/DDBJ databases">
        <title>Sequencing analysis of Aethionema coridifolium chloroplast DNA.</title>
        <authorList>
            <person name="Hosouchi T."/>
            <person name="Tsuruoka H."/>
            <person name="Kotani H."/>
        </authorList>
    </citation>
    <scope>NUCLEOTIDE SEQUENCE [LARGE SCALE GENOMIC DNA]</scope>
</reference>